<reference key="1">
    <citation type="journal article" date="2005" name="J. Virol.">
        <title>Genomic sequence analysis of Epstein-Barr virus strain GD1 from a nasopharyngeal carcinoma patient.</title>
        <authorList>
            <person name="Zeng M.-S."/>
            <person name="Li D.-J."/>
            <person name="Liu Q.-L."/>
            <person name="Song L.-B."/>
            <person name="Li M.-Z."/>
            <person name="Zhang R.-H."/>
            <person name="Yu X.-J."/>
            <person name="Wang H.-M."/>
            <person name="Ernberg I."/>
            <person name="Zeng Y.-X."/>
        </authorList>
    </citation>
    <scope>NUCLEOTIDE SEQUENCE [LARGE SCALE GENOMIC DNA]</scope>
</reference>
<proteinExistence type="inferred from homology"/>
<evidence type="ECO:0000250" key="1">
    <source>
        <dbReference type="UniProtKB" id="P03186"/>
    </source>
</evidence>
<evidence type="ECO:0000255" key="2">
    <source>
        <dbReference type="HAMAP-Rule" id="MF_04044"/>
    </source>
</evidence>
<evidence type="ECO:0000256" key="3">
    <source>
        <dbReference type="SAM" id="MobiDB-lite"/>
    </source>
</evidence>
<organismHost>
    <name type="scientific">Homo sapiens</name>
    <name type="common">Human</name>
    <dbReference type="NCBI Taxonomy" id="9606"/>
</organismHost>
<dbReference type="EC" id="3.4.19.12" evidence="2"/>
<dbReference type="EC" id="3.4.22.-" evidence="2"/>
<dbReference type="EMBL" id="AY961628">
    <property type="protein sequence ID" value="AAY41102.1"/>
    <property type="molecule type" value="Genomic_DNA"/>
</dbReference>
<dbReference type="SMR" id="Q3KSU8"/>
<dbReference type="IntAct" id="Q3KSU8">
    <property type="interactions" value="14"/>
</dbReference>
<dbReference type="Proteomes" id="UP000007641">
    <property type="component" value="Genome"/>
</dbReference>
<dbReference type="GO" id="GO:0030430">
    <property type="term" value="C:host cell cytoplasm"/>
    <property type="evidence" value="ECO:0007669"/>
    <property type="project" value="UniProtKB-SubCell"/>
</dbReference>
<dbReference type="GO" id="GO:0042025">
    <property type="term" value="C:host cell nucleus"/>
    <property type="evidence" value="ECO:0007669"/>
    <property type="project" value="UniProtKB-SubCell"/>
</dbReference>
<dbReference type="GO" id="GO:0019033">
    <property type="term" value="C:viral tegument"/>
    <property type="evidence" value="ECO:0007669"/>
    <property type="project" value="UniProtKB-SubCell"/>
</dbReference>
<dbReference type="GO" id="GO:0004843">
    <property type="term" value="F:cysteine-type deubiquitinase activity"/>
    <property type="evidence" value="ECO:0007669"/>
    <property type="project" value="UniProtKB-EC"/>
</dbReference>
<dbReference type="GO" id="GO:0006508">
    <property type="term" value="P:proteolysis"/>
    <property type="evidence" value="ECO:0007669"/>
    <property type="project" value="UniProtKB-KW"/>
</dbReference>
<dbReference type="GO" id="GO:0039648">
    <property type="term" value="P:symbiont-mediated perturbation of host ubiquitin-like protein modification"/>
    <property type="evidence" value="ECO:0007669"/>
    <property type="project" value="UniProtKB-KW"/>
</dbReference>
<dbReference type="Gene3D" id="3.90.70.120">
    <property type="match status" value="1"/>
</dbReference>
<dbReference type="HAMAP" id="MF_04044">
    <property type="entry name" value="HSV_LTP"/>
    <property type="match status" value="1"/>
</dbReference>
<dbReference type="InterPro" id="IPR006928">
    <property type="entry name" value="Herpes_teg_USP"/>
</dbReference>
<dbReference type="InterPro" id="IPR034702">
    <property type="entry name" value="HSV_LTP"/>
</dbReference>
<dbReference type="InterPro" id="IPR038765">
    <property type="entry name" value="Papain-like_cys_pep_sf"/>
</dbReference>
<dbReference type="PANTHER" id="PTHR34491">
    <property type="entry name" value="A-TYPE INCLUSION PROTEIN, PUTATIVE-RELATED"/>
    <property type="match status" value="1"/>
</dbReference>
<dbReference type="PANTHER" id="PTHR34491:SF74">
    <property type="entry name" value="DUF4456 DOMAIN-CONTAINING PROTEIN"/>
    <property type="match status" value="1"/>
</dbReference>
<dbReference type="Pfam" id="PF04843">
    <property type="entry name" value="Herpes_teg_N"/>
    <property type="match status" value="1"/>
</dbReference>
<dbReference type="SUPFAM" id="SSF54001">
    <property type="entry name" value="Cysteine proteinases"/>
    <property type="match status" value="1"/>
</dbReference>
<dbReference type="PROSITE" id="PS51521">
    <property type="entry name" value="HTUSP"/>
    <property type="match status" value="1"/>
</dbReference>
<feature type="chain" id="PRO_0000375970" description="Large tegument protein deneddylase">
    <location>
        <begin position="1"/>
        <end position="3176"/>
    </location>
</feature>
<feature type="domain" description="Peptidase C76" evidence="2">
    <location>
        <begin position="41"/>
        <end position="258"/>
    </location>
</feature>
<feature type="repeat" description="1">
    <location>
        <begin position="335"/>
        <end position="339"/>
    </location>
</feature>
<feature type="repeat" description="2">
    <location>
        <begin position="340"/>
        <end position="344"/>
    </location>
</feature>
<feature type="repeat" description="3">
    <location>
        <begin position="345"/>
        <end position="349"/>
    </location>
</feature>
<feature type="repeat" description="4">
    <location>
        <begin position="350"/>
        <end position="354"/>
    </location>
</feature>
<feature type="repeat" description="5">
    <location>
        <begin position="355"/>
        <end position="359"/>
    </location>
</feature>
<feature type="repeat" description="6; approximate">
    <location>
        <begin position="360"/>
        <end position="364"/>
    </location>
</feature>
<feature type="repeat" description="7; approximate">
    <location>
        <begin position="365"/>
        <end position="369"/>
    </location>
</feature>
<feature type="repeat" description="8">
    <location>
        <begin position="370"/>
        <end position="374"/>
    </location>
</feature>
<feature type="repeat" description="9">
    <location>
        <begin position="375"/>
        <end position="379"/>
    </location>
</feature>
<feature type="repeat" description="10; approximate">
    <location>
        <begin position="380"/>
        <end position="384"/>
    </location>
</feature>
<feature type="region of interest" description="Deubiquitination activity" evidence="2">
    <location>
        <begin position="1"/>
        <end position="268"/>
    </location>
</feature>
<feature type="region of interest" description="Disordered" evidence="3">
    <location>
        <begin position="1"/>
        <end position="28"/>
    </location>
</feature>
<feature type="region of interest" description="Disordered" evidence="3">
    <location>
        <begin position="319"/>
        <end position="342"/>
    </location>
</feature>
<feature type="region of interest" description="10 X 5 AA approximate repeats of P-A-S-A-A">
    <location>
        <begin position="335"/>
        <end position="384"/>
    </location>
</feature>
<feature type="region of interest" description="Disordered" evidence="3">
    <location>
        <begin position="376"/>
        <end position="683"/>
    </location>
</feature>
<feature type="region of interest" description="Interaction with inner tegument protein" evidence="2">
    <location>
        <begin position="581"/>
        <end position="611"/>
    </location>
</feature>
<feature type="region of interest" description="Disordered" evidence="3">
    <location>
        <begin position="928"/>
        <end position="950"/>
    </location>
</feature>
<feature type="region of interest" description="Disordered" evidence="3">
    <location>
        <begin position="1170"/>
        <end position="1193"/>
    </location>
</feature>
<feature type="region of interest" description="Disordered" evidence="3">
    <location>
        <begin position="1435"/>
        <end position="1461"/>
    </location>
</feature>
<feature type="region of interest" description="Disordered" evidence="3">
    <location>
        <begin position="2610"/>
        <end position="3008"/>
    </location>
</feature>
<feature type="region of interest" description="Disordered" evidence="3">
    <location>
        <begin position="3023"/>
        <end position="3043"/>
    </location>
</feature>
<feature type="compositionally biased region" description="Polar residues" evidence="3">
    <location>
        <begin position="1"/>
        <end position="12"/>
    </location>
</feature>
<feature type="compositionally biased region" description="Low complexity" evidence="3">
    <location>
        <begin position="376"/>
        <end position="386"/>
    </location>
</feature>
<feature type="compositionally biased region" description="Pro residues" evidence="3">
    <location>
        <begin position="457"/>
        <end position="488"/>
    </location>
</feature>
<feature type="compositionally biased region" description="Low complexity" evidence="3">
    <location>
        <begin position="519"/>
        <end position="546"/>
    </location>
</feature>
<feature type="compositionally biased region" description="Pro residues" evidence="3">
    <location>
        <begin position="579"/>
        <end position="636"/>
    </location>
</feature>
<feature type="compositionally biased region" description="Low complexity" evidence="3">
    <location>
        <begin position="1170"/>
        <end position="1182"/>
    </location>
</feature>
<feature type="compositionally biased region" description="Polar residues" evidence="3">
    <location>
        <begin position="2619"/>
        <end position="2630"/>
    </location>
</feature>
<feature type="compositionally biased region" description="Low complexity" evidence="3">
    <location>
        <begin position="2643"/>
        <end position="2654"/>
    </location>
</feature>
<feature type="compositionally biased region" description="Pro residues" evidence="3">
    <location>
        <begin position="2738"/>
        <end position="2747"/>
    </location>
</feature>
<feature type="compositionally biased region" description="Polar residues" evidence="3">
    <location>
        <begin position="2761"/>
        <end position="2772"/>
    </location>
</feature>
<feature type="compositionally biased region" description="Polar residues" evidence="3">
    <location>
        <begin position="2811"/>
        <end position="2831"/>
    </location>
</feature>
<feature type="compositionally biased region" description="Basic and acidic residues" evidence="3">
    <location>
        <begin position="2839"/>
        <end position="2854"/>
    </location>
</feature>
<feature type="compositionally biased region" description="Low complexity" evidence="3">
    <location>
        <begin position="2872"/>
        <end position="2886"/>
    </location>
</feature>
<feature type="compositionally biased region" description="Low complexity" evidence="3">
    <location>
        <begin position="2901"/>
        <end position="2912"/>
    </location>
</feature>
<feature type="active site" evidence="2">
    <location>
        <position position="61"/>
    </location>
</feature>
<feature type="active site" evidence="2">
    <location>
        <position position="193"/>
    </location>
</feature>
<feature type="active site" evidence="2">
    <location>
        <position position="195"/>
    </location>
</feature>
<feature type="site" description="Important for catalytic activity" evidence="2">
    <location>
        <position position="48"/>
    </location>
</feature>
<sequence>MSNGDWGQSQRPRGTGPMRGIRTMDVNAPGGGSGGSALRILGTASCNQAHCKFGRFAGIQCVSNCVLYLVKSFLAGRPLTSRPELDEVLDEGARLDALMRQSGILKGHEMAQLTDVPSSVVLRGGGRVHIYRSAEIFGLVLFPAQIANSAVVQSLAEVLHGSYNGVAQFILYICDIYAGGIIIETDGSFYLFDPHCQKDAAPGTPAHVRVSTYAHDILQYVGAPGAQYTCVHLYFLPEAFETEDPRIFMLEHYGVYDFYEANGSGFDLVGPELVSSDGEAAGTPDADSSPPVMLPFERRIIPYNLRPLPSRSFTSDSFPAARYSPAKTNSPPPSPASAAPASAAPASAAPASAAPASAAQASVAPASVAPASAAPASAAPDSAAPASSPPLFIPIPGLGHTPGVPAPSTPPRASGSAAPQTPKRKKGLGKDSPHKKPTSGRRLPLSSTTDTEDDQLPRPPVPPHRPPSAARLPPPVIPIPHQSPPASPTPRRAPVSTIAPSVTPSPRLPLQIPIPLPQAAPSNPEIPLTTPSPSPTAAAAPTATTLSPPPTQQQPLQSAAPAPSPPPTQQQPPQSAAPAPSPLLPQQQPPPSAAPAPSPLLPQQQPPPSAARAPSPLPPQQQPLPSATPAPPPAQQLPPSATTLEPEKNNPSAADRAGTEISPSPPFGQQPSFGDDASGGSGLVRYLSDLEEPFLSMSDSEEAESDLASDIPTTEDEDMFEDEVFSNSLESGSSAPTSPITLDTARSQYYQTTFDIETPEMDFVPLESNIARIAGHTYQEQAIVYDPASNREVPEADALSMIDYLLVTVVLEQGLIRSRDRSAVLNLLEFLKDWSGHLQVPTLDLEQLLTSELNIQNLANMLSENKGRAGEFHEHLAAKLEACLPSLATKDAVRVDAGAKMLAEIPQLAESDDGKFDLEAARRRLTDLLSGGDQEGEEGGGEPEDHSIYRGPHVDVPLVLDDESWKRLLSLAEAARTAVARQQAGVDEEDVRFLALLTAIEYGAPPAASVPPFVHNVAVRSKNAALHVRRCTADIRDKVASAASDYLSYLEDPSLPTVMDFDDLLTHLRHTCQIIASLPLLNIRYTSIEWDYRELLYLGTALSDMSGIPWPLERVEEDDPSIAPLPEFETVAKKQKELETTRENEKRLRTILDDIEAMLGLAGVASAPGAPISPASPSATPANHDNPEATPPLADTAALTIPVIEKYIANAGSIVGAAKNPTYIRLRDTIQQIVRSKKYLMNILKSITFYTIDNYIASFEESIDHLYRDLPVLDPEVQDGIDRILDPMVSEALHTFEMGNRLTLEPARLVALQNFATHSTLKETAAAVNLLPGLLAVYDATVTGQAPEDALRLLSGLQNQLSQTLIPGKLKKRFLSYLQKLKNNNNDQLRQKEVQAWRLEAEGFKPATEEQLEAFLDTAPNKELKRQYEKKLRQLMETGRKEKEKLREQEDKERRERRAREANEAWARIRKALGARPEPAPTSPDDWNTLLASLLPDNTDSAAAAAAAVARNTDILDSLTQILAAMLLGITRVRRERLRSLLVDDGGAAERMEAAEPGWFTDIETGPLARLDAWPATPAATAKEGGGGRGAEEAAGALFRARTAADAIRSALAQTRQALQSPDMKSAVVNTDLEAPYAEYERGLAGLLEKRRAAEAALTAIVSEYVDRTLPEATNDPGQANLPPPPTIPQATAPPRLASDLALWPKKPQLLTRRERDDLLQATGDFFSELLTEAEAAEVRALEEQVRESQTLMAKAHEMAASTRRGFHTALEAVLSRSRDEAPDDELRSLLPSPPKAPVQAPLEAALARAAAGNGSWPYRKSLAAAKWIRGICEAVRGLSEGALALAGGAGAWLNLAAAADGEIHELTRLLEVEGMAQNSMDGMEELRLALATLDPKRVAGGKETVADWKRRLSRLEAIIQEAQEESQLQGTLQDLVTQARGHTDPRQLKIVVEAARGLALGASAGSQYALLKDKLLRYASAKQSFLAFYETAQPTVFVKHPLTNNLPLLITISAPPTGWGNGAPTRRAQFLAAAGPAKYAGTLWLETESPCDPLNPAYVSADTQEPLNYIPVYHNFLEYVMPTVLENPEAFSLTPAGRPQAIGPPQDDQERRRRTLASVASARLSAAAADSYWDTWPDVESNAGELLREYVSAPKALMEDLADNPIVAMTLLAHASLIASRNHPPYPAPATDREVILLEQREIMALLVGTHPAYAAAFLGAPSFYAGLGLVSALARDGGLGDLLSDSVLTYRLVRSPASGRGGMPSTTRGSDDGEDARRLTRHRIAGPPTGFIFFQDAWEEMDTRAALWPHPEFLGLVHNQSTARARACMLLLARRCFAPEALQQLWHSLRPLEGPVAFQDYLRDFVKQAYTRGEELPRAEGLEVPRETPSSYGTVTGRALRNLMPYGTPITGPKRGSGDTIPVSVFEAAVAAAFLGRPLTLFVSSQYLFNLKTLGQVRVVAPLLYCDGHSEPFRSLVETISLNFLQDLDGYSESFEPEMSIFARQAVWLRELLTEARAAKPKEARPPTVAILANRKNIIWKCFTYRHNLPDVQFYFNAAGASRWPTDVLNPSFYEHEDPPLPVGYQLPPNPRNVQELFSGFPPRVGHGLVSGDGFQSADNTPASSDRLQQLGGGETDQGEEGSTTAESEASGPPSPQSPLLEKVAPGRPRDWLSPTSSPRDVTVTPGLAAPITLPGPRLMARPYFGAETRASESPDRSPGTSPRPWPKDSLELLPQPAPQQPPSSPWASEQGPIVYTLSPHSTPSTASGSQKKHTIQIPGLVPSQKPSYPPSAPYKPGQSTGGIAPTPSAASLTTFGLQPQDTQASSQDPPYGHSIMQREKKQQGGREEAAEIRPSATRLPTAVGLRPRAPVVAAGAAASATPAFDPGEAPSGLPIPQAPALGSGLAAPAHTPVGALAPSPQKTQAQRPQDAAALPTPTIKAVGARPVPKATGALAAGARPRGQPTAAPPSAASPPRVSLPVRSRQQQSPAIPLPPMHSGSEPGARPEVRLSQYRHAGPQTYTVQKEAPPSAASQLPKMPKCKDSMYYPPSGSARYPAPFQALSFSQSVASPAPSSDQTTLLWNTPSVVTQFLSIEDIIREVVTGGSTSGDLVVPSGSPSSLSTAAPEQDLRYSLTLSQASRVLSRFVSQLRRKLERSTHRLIADLERLKFLYL</sequence>
<protein>
    <recommendedName>
        <fullName evidence="2">Large tegument protein deneddylase</fullName>
        <ecNumber evidence="2">3.4.19.12</ecNumber>
        <ecNumber evidence="2">3.4.22.-</ecNumber>
    </recommendedName>
</protein>
<accession>Q3KSU8</accession>
<comment type="function">
    <text evidence="1 2">Large tegument protein that plays multiple roles in the viral cycle. During viral entry, remains associated with the capsid while most of the tegument is detached and participates in the capsid transport toward the host nucleus. Plays a role in the routing of the capsid at the nuclear pore complex and subsequent uncoating. Within the host nucleus, acts as a deneddylase and promotes the degradation of nuclear CRLs (cullin-RING ubiquitin ligases) and thereby stabilizes nuclear CRL substrates, while cytoplasmic CRLs remain unaffected. These modifications prevent host cell cycle S-phase progression and create a favorable environment allowing efficient viral genome replication. Participates later in the secondary envelopment of capsids. Indeed, plays a linker role for the association of the outer viral tegument to the capsids together with the inner tegument protein (By similarity). Counteracts host TLR-mediated NF-kappa-B activation through both MYD88 and TICAM1-dependent pathways by interfering with 'Lys-63'- and 'Lys-48'-linked ubiquitination of signaling intermediates such as TRAF6 and IKBKG. Inhibits type I interferon production by forming a tri-molecular complex with host TRIM25 and 14-3-3 thereby promoting TRIM25 autoubiquitination and sequestration of the ligase into inactive protein aggregates. In turn, host RIGI is recruited to the complex but ubiquitination is severely impaired leading to inhibition of the pathway. Also catalyzes the removal of 'Lys-48'- and 'Lys-63'-linked ubiquitin chains on host TBK1 and STING1 suppressing cGAS-STING signaling in addition to the RIGI-MAVS pathway. Inhibits selective autophagy by deubiquitinating host SQSTM1. In turn, decreased SQSTM1 ubiquitination fails to recruit LC3 to SQSTM1-positive aggregates. In the host nucleus, deubiquitinates topoisomerase II subunits TOP2A and TOP2B thereby stabilizing SUMOylated TOP2 which halts the DNA damage response to TOP2-induced double strand DNA breaks and promotes cell survival (By similarity).</text>
</comment>
<comment type="catalytic activity">
    <reaction evidence="2">
        <text>Thiol-dependent hydrolysis of ester, thioester, amide, peptide and isopeptide bonds formed by the C-terminal Gly of ubiquitin (a 76-residue protein attached to proteins as an intracellular targeting signal).</text>
        <dbReference type="EC" id="3.4.19.12"/>
    </reaction>
</comment>
<comment type="subunit">
    <text evidence="1 2">Interacts with host CUL1 and CUL4A; these interactions inhibit the E3 ligase activity of cullins (By similarity). Interacts with inner tegument protein. Interacts with capsid vertex specific component CVC2. Interacts with the major capsid protein/MCP (By similarity). Interacts with host TRIM25 and YWHAZ (By similarity).</text>
</comment>
<comment type="subcellular location">
    <subcellularLocation>
        <location evidence="2">Virion tegument</location>
    </subcellularLocation>
    <subcellularLocation>
        <location evidence="2">Host cytoplasm</location>
    </subcellularLocation>
    <subcellularLocation>
        <location evidence="2">Host nucleus</location>
    </subcellularLocation>
    <text evidence="2">Tightly associated with the capsid.</text>
</comment>
<comment type="similarity">
    <text evidence="2">Belongs to the herpesviridae large tegument protein family.</text>
</comment>
<keyword id="KW-1035">Host cytoplasm</keyword>
<keyword id="KW-1048">Host nucleus</keyword>
<keyword id="KW-0945">Host-virus interaction</keyword>
<keyword id="KW-0378">Hydrolase</keyword>
<keyword id="KW-1127">Modulation of host ubiquitin pathway by viral deubiquitinase</keyword>
<keyword id="KW-1130">Modulation of host ubiquitin pathway by virus</keyword>
<keyword id="KW-0645">Protease</keyword>
<keyword id="KW-0677">Repeat</keyword>
<keyword id="KW-0788">Thiol protease</keyword>
<keyword id="KW-0833">Ubl conjugation pathway</keyword>
<keyword id="KW-0946">Virion</keyword>
<keyword id="KW-0920">Virion tegument</keyword>
<name>LTP_EBVG</name>
<gene>
    <name type="ORF">BPLF1</name>
</gene>
<organism>
    <name type="scientific">Epstein-Barr virus (strain GD1)</name>
    <name type="common">HHV-4</name>
    <name type="synonym">Human gammaherpesvirus 4</name>
    <dbReference type="NCBI Taxonomy" id="10376"/>
    <lineage>
        <taxon>Viruses</taxon>
        <taxon>Duplodnaviria</taxon>
        <taxon>Heunggongvirae</taxon>
        <taxon>Peploviricota</taxon>
        <taxon>Herviviricetes</taxon>
        <taxon>Herpesvirales</taxon>
        <taxon>Orthoherpesviridae</taxon>
        <taxon>Gammaherpesvirinae</taxon>
        <taxon>Lymphocryptovirus</taxon>
        <taxon>Lymphocryptovirus humangamma4</taxon>
    </lineage>
</organism>